<name>TUSA_YERPE</name>
<comment type="function">
    <text evidence="1">Sulfur carrier protein involved in sulfur trafficking in the cell. Part of a sulfur-relay system required for 2-thiolation during synthesis of 2-thiouridine of the modified wobble base 5-methylaminomethyl-2-thiouridine (mnm(5)s(2)U) in tRNA. Interacts with IscS and stimulates its cysteine desulfurase activity. Accepts an activated sulfur from IscS, which is then transferred to TusD, and thus determines the direction of sulfur flow from IscS to 2-thiouridine formation. Also appears to be involved in sulfur transfer for the biosynthesis of molybdopterin.</text>
</comment>
<comment type="pathway">
    <text evidence="1">tRNA modification.</text>
</comment>
<comment type="subunit">
    <text evidence="1">Interacts with IscS.</text>
</comment>
<comment type="subcellular location">
    <subcellularLocation>
        <location evidence="1">Cytoplasm</location>
    </subcellularLocation>
</comment>
<comment type="similarity">
    <text evidence="1">Belongs to the sulfur carrier protein TusA family.</text>
</comment>
<comment type="sequence caution" evidence="2">
    <conflict type="erroneous initiation">
        <sequence resource="EMBL-CDS" id="AAM83998"/>
    </conflict>
</comment>
<comment type="sequence caution" evidence="2">
    <conflict type="erroneous initiation">
        <sequence resource="EMBL-CDS" id="AAS63395"/>
    </conflict>
</comment>
<gene>
    <name evidence="1" type="primary">tusA</name>
    <name type="ordered locus">YPO3821</name>
    <name type="ordered locus">y0409</name>
    <name type="ordered locus">YP_3227</name>
</gene>
<proteinExistence type="inferred from homology"/>
<feature type="chain" id="PRO_0000159060" description="Sulfur carrier protein TusA">
    <location>
        <begin position="1"/>
        <end position="84"/>
    </location>
</feature>
<feature type="active site" description="Cysteine persulfide intermediate" evidence="1">
    <location>
        <position position="19"/>
    </location>
</feature>
<sequence>MTDIFANPDKTLDALGLRCPEPVMMVRKTVRHMEEGQTLLIIADDPATTRDIPGFCRFMDHQLLAQDTEQTPYRYLVRKGITAG</sequence>
<evidence type="ECO:0000255" key="1">
    <source>
        <dbReference type="HAMAP-Rule" id="MF_00413"/>
    </source>
</evidence>
<evidence type="ECO:0000305" key="2"/>
<protein>
    <recommendedName>
        <fullName evidence="1">Sulfur carrier protein TusA</fullName>
    </recommendedName>
    <alternativeName>
        <fullName evidence="1">Sulfur mediator TusA</fullName>
    </alternativeName>
    <alternativeName>
        <fullName evidence="1">Sulfur transfer protein TusA</fullName>
    </alternativeName>
    <alternativeName>
        <fullName evidence="1">tRNA 2-thiouridine synthesizing protein A</fullName>
    </alternativeName>
</protein>
<organism>
    <name type="scientific">Yersinia pestis</name>
    <dbReference type="NCBI Taxonomy" id="632"/>
    <lineage>
        <taxon>Bacteria</taxon>
        <taxon>Pseudomonadati</taxon>
        <taxon>Pseudomonadota</taxon>
        <taxon>Gammaproteobacteria</taxon>
        <taxon>Enterobacterales</taxon>
        <taxon>Yersiniaceae</taxon>
        <taxon>Yersinia</taxon>
    </lineage>
</organism>
<reference key="1">
    <citation type="journal article" date="2001" name="Nature">
        <title>Genome sequence of Yersinia pestis, the causative agent of plague.</title>
        <authorList>
            <person name="Parkhill J."/>
            <person name="Wren B.W."/>
            <person name="Thomson N.R."/>
            <person name="Titball R.W."/>
            <person name="Holden M.T.G."/>
            <person name="Prentice M.B."/>
            <person name="Sebaihia M."/>
            <person name="James K.D."/>
            <person name="Churcher C.M."/>
            <person name="Mungall K.L."/>
            <person name="Baker S."/>
            <person name="Basham D."/>
            <person name="Bentley S.D."/>
            <person name="Brooks K."/>
            <person name="Cerdeno-Tarraga A.-M."/>
            <person name="Chillingworth T."/>
            <person name="Cronin A."/>
            <person name="Davies R.M."/>
            <person name="Davis P."/>
            <person name="Dougan G."/>
            <person name="Feltwell T."/>
            <person name="Hamlin N."/>
            <person name="Holroyd S."/>
            <person name="Jagels K."/>
            <person name="Karlyshev A.V."/>
            <person name="Leather S."/>
            <person name="Moule S."/>
            <person name="Oyston P.C.F."/>
            <person name="Quail M.A."/>
            <person name="Rutherford K.M."/>
            <person name="Simmonds M."/>
            <person name="Skelton J."/>
            <person name="Stevens K."/>
            <person name="Whitehead S."/>
            <person name="Barrell B.G."/>
        </authorList>
    </citation>
    <scope>NUCLEOTIDE SEQUENCE [LARGE SCALE GENOMIC DNA]</scope>
    <source>
        <strain>CO-92 / Biovar Orientalis</strain>
    </source>
</reference>
<reference key="2">
    <citation type="journal article" date="2002" name="J. Bacteriol.">
        <title>Genome sequence of Yersinia pestis KIM.</title>
        <authorList>
            <person name="Deng W."/>
            <person name="Burland V."/>
            <person name="Plunkett G. III"/>
            <person name="Boutin A."/>
            <person name="Mayhew G.F."/>
            <person name="Liss P."/>
            <person name="Perna N.T."/>
            <person name="Rose D.J."/>
            <person name="Mau B."/>
            <person name="Zhou S."/>
            <person name="Schwartz D.C."/>
            <person name="Fetherston J.D."/>
            <person name="Lindler L.E."/>
            <person name="Brubaker R.R."/>
            <person name="Plano G.V."/>
            <person name="Straley S.C."/>
            <person name="McDonough K.A."/>
            <person name="Nilles M.L."/>
            <person name="Matson J.S."/>
            <person name="Blattner F.R."/>
            <person name="Perry R.D."/>
        </authorList>
    </citation>
    <scope>NUCLEOTIDE SEQUENCE [LARGE SCALE GENOMIC DNA]</scope>
    <source>
        <strain>KIM10+ / Biovar Mediaevalis</strain>
    </source>
</reference>
<reference key="3">
    <citation type="journal article" date="2004" name="DNA Res.">
        <title>Complete genome sequence of Yersinia pestis strain 91001, an isolate avirulent to humans.</title>
        <authorList>
            <person name="Song Y."/>
            <person name="Tong Z."/>
            <person name="Wang J."/>
            <person name="Wang L."/>
            <person name="Guo Z."/>
            <person name="Han Y."/>
            <person name="Zhang J."/>
            <person name="Pei D."/>
            <person name="Zhou D."/>
            <person name="Qin H."/>
            <person name="Pang X."/>
            <person name="Han Y."/>
            <person name="Zhai J."/>
            <person name="Li M."/>
            <person name="Cui B."/>
            <person name="Qi Z."/>
            <person name="Jin L."/>
            <person name="Dai R."/>
            <person name="Chen F."/>
            <person name="Li S."/>
            <person name="Ye C."/>
            <person name="Du Z."/>
            <person name="Lin W."/>
            <person name="Wang J."/>
            <person name="Yu J."/>
            <person name="Yang H."/>
            <person name="Wang J."/>
            <person name="Huang P."/>
            <person name="Yang R."/>
        </authorList>
    </citation>
    <scope>NUCLEOTIDE SEQUENCE [LARGE SCALE GENOMIC DNA]</scope>
    <source>
        <strain>91001 / Biovar Mediaevalis</strain>
    </source>
</reference>
<accession>Q8ZAI0</accession>
<accession>Q0WAI9</accession>
<keyword id="KW-0963">Cytoplasm</keyword>
<keyword id="KW-1185">Reference proteome</keyword>
<keyword id="KW-0819">tRNA processing</keyword>
<dbReference type="EMBL" id="AL590842">
    <property type="protein sequence ID" value="CAL22408.1"/>
    <property type="molecule type" value="Genomic_DNA"/>
</dbReference>
<dbReference type="EMBL" id="AE009952">
    <property type="protein sequence ID" value="AAM83998.1"/>
    <property type="status" value="ALT_INIT"/>
    <property type="molecule type" value="Genomic_DNA"/>
</dbReference>
<dbReference type="EMBL" id="AE017042">
    <property type="protein sequence ID" value="AAS63395.1"/>
    <property type="status" value="ALT_INIT"/>
    <property type="molecule type" value="Genomic_DNA"/>
</dbReference>
<dbReference type="PIR" id="AE0465">
    <property type="entry name" value="AE0465"/>
</dbReference>
<dbReference type="RefSeq" id="WP_002215973.1">
    <property type="nucleotide sequence ID" value="NZ_WUCM01000033.1"/>
</dbReference>
<dbReference type="RefSeq" id="YP_002348699.1">
    <property type="nucleotide sequence ID" value="NC_003143.1"/>
</dbReference>
<dbReference type="SMR" id="Q8ZAI0"/>
<dbReference type="STRING" id="214092.YPO3821"/>
<dbReference type="PaxDb" id="214092-YPO3821"/>
<dbReference type="EnsemblBacteria" id="AAS63395">
    <property type="protein sequence ID" value="AAS63395"/>
    <property type="gene ID" value="YP_3227"/>
</dbReference>
<dbReference type="GeneID" id="57974887"/>
<dbReference type="KEGG" id="ype:YPO3821"/>
<dbReference type="KEGG" id="ypk:y0409"/>
<dbReference type="KEGG" id="ypm:YP_3227"/>
<dbReference type="PATRIC" id="fig|214092.21.peg.4342"/>
<dbReference type="eggNOG" id="COG0425">
    <property type="taxonomic scope" value="Bacteria"/>
</dbReference>
<dbReference type="HOGENOM" id="CLU_1926784_0_0_6"/>
<dbReference type="OMA" id="FCQFLGH"/>
<dbReference type="OrthoDB" id="9797352at2"/>
<dbReference type="Proteomes" id="UP000000815">
    <property type="component" value="Chromosome"/>
</dbReference>
<dbReference type="Proteomes" id="UP000001019">
    <property type="component" value="Chromosome"/>
</dbReference>
<dbReference type="Proteomes" id="UP000002490">
    <property type="component" value="Chromosome"/>
</dbReference>
<dbReference type="GO" id="GO:0005737">
    <property type="term" value="C:cytoplasm"/>
    <property type="evidence" value="ECO:0007669"/>
    <property type="project" value="UniProtKB-SubCell"/>
</dbReference>
<dbReference type="GO" id="GO:0097163">
    <property type="term" value="F:sulfur carrier activity"/>
    <property type="evidence" value="ECO:0007669"/>
    <property type="project" value="UniProtKB-UniRule"/>
</dbReference>
<dbReference type="GO" id="GO:0002143">
    <property type="term" value="P:tRNA wobble position uridine thiolation"/>
    <property type="evidence" value="ECO:0007669"/>
    <property type="project" value="InterPro"/>
</dbReference>
<dbReference type="CDD" id="cd03423">
    <property type="entry name" value="SirA"/>
    <property type="match status" value="1"/>
</dbReference>
<dbReference type="Gene3D" id="3.30.110.40">
    <property type="entry name" value="TusA-like domain"/>
    <property type="match status" value="1"/>
</dbReference>
<dbReference type="HAMAP" id="MF_00413">
    <property type="entry name" value="Thiourid_synth_A"/>
    <property type="match status" value="1"/>
</dbReference>
<dbReference type="InterPro" id="IPR022931">
    <property type="entry name" value="Sulphur_carrier_TusA"/>
</dbReference>
<dbReference type="InterPro" id="IPR001455">
    <property type="entry name" value="TusA-like"/>
</dbReference>
<dbReference type="InterPro" id="IPR036868">
    <property type="entry name" value="TusA-like_sf"/>
</dbReference>
<dbReference type="NCBIfam" id="NF001423">
    <property type="entry name" value="PRK00299.1"/>
    <property type="match status" value="1"/>
</dbReference>
<dbReference type="PANTHER" id="PTHR33279:SF2">
    <property type="entry name" value="SULFUR CARRIER PROTEIN TUSA"/>
    <property type="match status" value="1"/>
</dbReference>
<dbReference type="PANTHER" id="PTHR33279">
    <property type="entry name" value="SULFUR CARRIER PROTEIN YEDF-RELATED"/>
    <property type="match status" value="1"/>
</dbReference>
<dbReference type="Pfam" id="PF01206">
    <property type="entry name" value="TusA"/>
    <property type="match status" value="1"/>
</dbReference>
<dbReference type="SUPFAM" id="SSF64307">
    <property type="entry name" value="SirA-like"/>
    <property type="match status" value="1"/>
</dbReference>
<dbReference type="PROSITE" id="PS01148">
    <property type="entry name" value="UPF0033"/>
    <property type="match status" value="1"/>
</dbReference>